<comment type="function">
    <text evidence="1">Catalyzes the phosphorylation of D-fructose 6-phosphate to fructose 1,6-bisphosphate by ATP, the first committing step of glycolysis.</text>
</comment>
<comment type="catalytic activity">
    <reaction evidence="1">
        <text>beta-D-fructose 6-phosphate + ATP = beta-D-fructose 1,6-bisphosphate + ADP + H(+)</text>
        <dbReference type="Rhea" id="RHEA:16109"/>
        <dbReference type="ChEBI" id="CHEBI:15378"/>
        <dbReference type="ChEBI" id="CHEBI:30616"/>
        <dbReference type="ChEBI" id="CHEBI:32966"/>
        <dbReference type="ChEBI" id="CHEBI:57634"/>
        <dbReference type="ChEBI" id="CHEBI:456216"/>
        <dbReference type="EC" id="2.7.1.11"/>
    </reaction>
</comment>
<comment type="cofactor">
    <cofactor evidence="1">
        <name>Mg(2+)</name>
        <dbReference type="ChEBI" id="CHEBI:18420"/>
    </cofactor>
</comment>
<comment type="activity regulation">
    <text evidence="1">Allosterically activated by ADP, AMP, or fructose 2,6-bisphosphate, and allosterically inhibited by ATP or citrate.</text>
</comment>
<comment type="pathway">
    <text evidence="1">Carbohydrate degradation; glycolysis; D-glyceraldehyde 3-phosphate and glycerone phosphate from D-glucose: step 3/4.</text>
</comment>
<comment type="subunit">
    <text evidence="1">Homotetramer.</text>
</comment>
<comment type="subcellular location">
    <subcellularLocation>
        <location evidence="1">Cytoplasm</location>
    </subcellularLocation>
</comment>
<comment type="similarity">
    <text evidence="1">Belongs to the phosphofructokinase type A (PFKA) family. ATP-dependent PFK group I subfamily. Eukaryotic two domain clade 'E' sub-subfamily.</text>
</comment>
<gene>
    <name type="primary">pfkA</name>
    <name type="ORF">AFUA_4G00960</name>
</gene>
<proteinExistence type="inferred from homology"/>
<protein>
    <recommendedName>
        <fullName evidence="1">ATP-dependent 6-phosphofructokinase</fullName>
        <shortName evidence="1">ATP-PFK</shortName>
        <shortName evidence="1">Phosphofructokinase</shortName>
        <ecNumber evidence="1">2.7.1.11</ecNumber>
    </recommendedName>
    <alternativeName>
        <fullName evidence="1">Phosphohexokinase</fullName>
    </alternativeName>
</protein>
<name>PFKA_ASPFU</name>
<feature type="chain" id="PRO_0000112034" description="ATP-dependent 6-phosphofructokinase">
    <location>
        <begin position="1"/>
        <end position="808"/>
    </location>
</feature>
<feature type="region of interest" description="N-terminal catalytic PFK domain 1">
    <location>
        <begin position="1"/>
        <end position="389"/>
    </location>
</feature>
<feature type="region of interest" description="Disordered" evidence="2">
    <location>
        <begin position="1"/>
        <end position="21"/>
    </location>
</feature>
<feature type="region of interest" description="Interdomain linker">
    <location>
        <begin position="390"/>
        <end position="403"/>
    </location>
</feature>
<feature type="region of interest" description="C-terminal regulatory PFK domain 2">
    <location>
        <begin position="404"/>
        <end position="808"/>
    </location>
</feature>
<feature type="active site" description="Proton acceptor" evidence="1">
    <location>
        <position position="164"/>
    </location>
</feature>
<feature type="binding site" evidence="1">
    <location>
        <position position="23"/>
    </location>
    <ligand>
        <name>ATP</name>
        <dbReference type="ChEBI" id="CHEBI:30616"/>
    </ligand>
</feature>
<feature type="binding site" evidence="1">
    <location>
        <begin position="86"/>
        <end position="87"/>
    </location>
    <ligand>
        <name>ATP</name>
        <dbReference type="ChEBI" id="CHEBI:30616"/>
    </ligand>
</feature>
<feature type="binding site" evidence="1">
    <location>
        <begin position="116"/>
        <end position="119"/>
    </location>
    <ligand>
        <name>ATP</name>
        <dbReference type="ChEBI" id="CHEBI:30616"/>
    </ligand>
</feature>
<feature type="binding site" evidence="1">
    <location>
        <position position="117"/>
    </location>
    <ligand>
        <name>Mg(2+)</name>
        <dbReference type="ChEBI" id="CHEBI:18420"/>
        <note>catalytic</note>
    </ligand>
</feature>
<feature type="binding site" description="in other chain" evidence="1">
    <location>
        <begin position="162"/>
        <end position="164"/>
    </location>
    <ligand>
        <name>substrate</name>
        <note>ligand shared between dimeric partners</note>
    </ligand>
</feature>
<feature type="binding site" evidence="1">
    <location>
        <position position="199"/>
    </location>
    <ligand>
        <name>substrate</name>
        <note>ligand shared between dimeric partners</note>
    </ligand>
</feature>
<feature type="binding site" description="in other chain" evidence="1">
    <location>
        <begin position="206"/>
        <end position="208"/>
    </location>
    <ligand>
        <name>substrate</name>
        <note>ligand shared between dimeric partners</note>
    </ligand>
</feature>
<feature type="binding site" description="in other chain" evidence="1">
    <location>
        <position position="263"/>
    </location>
    <ligand>
        <name>substrate</name>
        <note>ligand shared between dimeric partners</note>
    </ligand>
</feature>
<feature type="binding site" evidence="1">
    <location>
        <position position="291"/>
    </location>
    <ligand>
        <name>substrate</name>
        <note>ligand shared between dimeric partners</note>
    </ligand>
</feature>
<feature type="binding site" description="in other chain" evidence="1">
    <location>
        <begin position="297"/>
        <end position="300"/>
    </location>
    <ligand>
        <name>substrate</name>
        <note>ligand shared between dimeric partners</note>
    </ligand>
</feature>
<feature type="binding site" description="in other chain" evidence="1">
    <location>
        <position position="480"/>
    </location>
    <ligand>
        <name>beta-D-fructose 2,6-bisphosphate</name>
        <dbReference type="ChEBI" id="CHEBI:58579"/>
        <note>allosteric activator; ligand shared between dimeric partners</note>
    </ligand>
</feature>
<feature type="binding site" description="in other chain" evidence="1">
    <location>
        <begin position="537"/>
        <end position="541"/>
    </location>
    <ligand>
        <name>beta-D-fructose 2,6-bisphosphate</name>
        <dbReference type="ChEBI" id="CHEBI:58579"/>
        <note>allosteric activator; ligand shared between dimeric partners</note>
    </ligand>
</feature>
<feature type="binding site" evidence="1">
    <location>
        <position position="575"/>
    </location>
    <ligand>
        <name>beta-D-fructose 2,6-bisphosphate</name>
        <dbReference type="ChEBI" id="CHEBI:58579"/>
        <note>allosteric activator; ligand shared between dimeric partners</note>
    </ligand>
</feature>
<feature type="binding site" description="in other chain" evidence="1">
    <location>
        <begin position="582"/>
        <end position="584"/>
    </location>
    <ligand>
        <name>beta-D-fructose 2,6-bisphosphate</name>
        <dbReference type="ChEBI" id="CHEBI:58579"/>
        <note>allosteric activator; ligand shared between dimeric partners</note>
    </ligand>
</feature>
<feature type="binding site" description="in other chain" evidence="1">
    <location>
        <position position="642"/>
    </location>
    <ligand>
        <name>beta-D-fructose 2,6-bisphosphate</name>
        <dbReference type="ChEBI" id="CHEBI:58579"/>
        <note>allosteric activator; ligand shared between dimeric partners</note>
    </ligand>
</feature>
<feature type="binding site" evidence="1">
    <location>
        <position position="668"/>
    </location>
    <ligand>
        <name>beta-D-fructose 2,6-bisphosphate</name>
        <dbReference type="ChEBI" id="CHEBI:58579"/>
        <note>allosteric activator; ligand shared between dimeric partners</note>
    </ligand>
</feature>
<feature type="binding site" description="in other chain" evidence="1">
    <location>
        <begin position="674"/>
        <end position="677"/>
    </location>
    <ligand>
        <name>beta-D-fructose 2,6-bisphosphate</name>
        <dbReference type="ChEBI" id="CHEBI:58579"/>
        <note>allosteric activator; ligand shared between dimeric partners</note>
    </ligand>
</feature>
<feature type="binding site" description="in other chain" evidence="1">
    <location>
        <position position="749"/>
    </location>
    <ligand>
        <name>beta-D-fructose 2,6-bisphosphate</name>
        <dbReference type="ChEBI" id="CHEBI:58579"/>
        <note>allosteric activator; ligand shared between dimeric partners</note>
    </ligand>
</feature>
<reference key="1">
    <citation type="journal article" date="2005" name="Nature">
        <title>Genomic sequence of the pathogenic and allergenic filamentous fungus Aspergillus fumigatus.</title>
        <authorList>
            <person name="Nierman W.C."/>
            <person name="Pain A."/>
            <person name="Anderson M.J."/>
            <person name="Wortman J.R."/>
            <person name="Kim H.S."/>
            <person name="Arroyo J."/>
            <person name="Berriman M."/>
            <person name="Abe K."/>
            <person name="Archer D.B."/>
            <person name="Bermejo C."/>
            <person name="Bennett J.W."/>
            <person name="Bowyer P."/>
            <person name="Chen D."/>
            <person name="Collins M."/>
            <person name="Coulsen R."/>
            <person name="Davies R."/>
            <person name="Dyer P.S."/>
            <person name="Farman M.L."/>
            <person name="Fedorova N."/>
            <person name="Fedorova N.D."/>
            <person name="Feldblyum T.V."/>
            <person name="Fischer R."/>
            <person name="Fosker N."/>
            <person name="Fraser A."/>
            <person name="Garcia J.L."/>
            <person name="Garcia M.J."/>
            <person name="Goble A."/>
            <person name="Goldman G.H."/>
            <person name="Gomi K."/>
            <person name="Griffith-Jones S."/>
            <person name="Gwilliam R."/>
            <person name="Haas B.J."/>
            <person name="Haas H."/>
            <person name="Harris D.E."/>
            <person name="Horiuchi H."/>
            <person name="Huang J."/>
            <person name="Humphray S."/>
            <person name="Jimenez J."/>
            <person name="Keller N."/>
            <person name="Khouri H."/>
            <person name="Kitamoto K."/>
            <person name="Kobayashi T."/>
            <person name="Konzack S."/>
            <person name="Kulkarni R."/>
            <person name="Kumagai T."/>
            <person name="Lafton A."/>
            <person name="Latge J.-P."/>
            <person name="Li W."/>
            <person name="Lord A."/>
            <person name="Lu C."/>
            <person name="Majoros W.H."/>
            <person name="May G.S."/>
            <person name="Miller B.L."/>
            <person name="Mohamoud Y."/>
            <person name="Molina M."/>
            <person name="Monod M."/>
            <person name="Mouyna I."/>
            <person name="Mulligan S."/>
            <person name="Murphy L.D."/>
            <person name="O'Neil S."/>
            <person name="Paulsen I."/>
            <person name="Penalva M.A."/>
            <person name="Pertea M."/>
            <person name="Price C."/>
            <person name="Pritchard B.L."/>
            <person name="Quail M.A."/>
            <person name="Rabbinowitsch E."/>
            <person name="Rawlins N."/>
            <person name="Rajandream M.A."/>
            <person name="Reichard U."/>
            <person name="Renauld H."/>
            <person name="Robson G.D."/>
            <person name="Rodriguez de Cordoba S."/>
            <person name="Rodriguez-Pena J.M."/>
            <person name="Ronning C.M."/>
            <person name="Rutter S."/>
            <person name="Salzberg S.L."/>
            <person name="Sanchez M."/>
            <person name="Sanchez-Ferrero J.C."/>
            <person name="Saunders D."/>
            <person name="Seeger K."/>
            <person name="Squares R."/>
            <person name="Squares S."/>
            <person name="Takeuchi M."/>
            <person name="Tekaia F."/>
            <person name="Turner G."/>
            <person name="Vazquez de Aldana C.R."/>
            <person name="Weidman J."/>
            <person name="White O."/>
            <person name="Woodward J.R."/>
            <person name="Yu J.-H."/>
            <person name="Fraser C.M."/>
            <person name="Galagan J.E."/>
            <person name="Asai K."/>
            <person name="Machida M."/>
            <person name="Hall N."/>
            <person name="Barrell B.G."/>
            <person name="Denning D.W."/>
        </authorList>
    </citation>
    <scope>NUCLEOTIDE SEQUENCE [LARGE SCALE GENOMIC DNA]</scope>
    <source>
        <strain>ATCC MYA-4609 / CBS 101355 / FGSC A1100 / Af293</strain>
    </source>
</reference>
<dbReference type="EC" id="2.7.1.11" evidence="1"/>
<dbReference type="EMBL" id="AAHF01000017">
    <property type="protein sequence ID" value="EAL84323.1"/>
    <property type="molecule type" value="Genomic_DNA"/>
</dbReference>
<dbReference type="RefSeq" id="XP_746361.1">
    <property type="nucleotide sequence ID" value="XM_741268.1"/>
</dbReference>
<dbReference type="SMR" id="Q4W9B8"/>
<dbReference type="FunCoup" id="Q4W9B8">
    <property type="interactions" value="849"/>
</dbReference>
<dbReference type="STRING" id="330879.Q4W9B8"/>
<dbReference type="EnsemblFungi" id="EAL84323">
    <property type="protein sequence ID" value="EAL84323"/>
    <property type="gene ID" value="AFUA_4G00960"/>
</dbReference>
<dbReference type="GeneID" id="3503711"/>
<dbReference type="KEGG" id="afm:AFUA_4G00960"/>
<dbReference type="VEuPathDB" id="FungiDB:Afu4g00960"/>
<dbReference type="eggNOG" id="KOG2440">
    <property type="taxonomic scope" value="Eukaryota"/>
</dbReference>
<dbReference type="HOGENOM" id="CLU_011053_0_0_1"/>
<dbReference type="InParanoid" id="Q4W9B8"/>
<dbReference type="OMA" id="EWQDQMC"/>
<dbReference type="OrthoDB" id="537915at2759"/>
<dbReference type="UniPathway" id="UPA00109">
    <property type="reaction ID" value="UER00182"/>
</dbReference>
<dbReference type="Proteomes" id="UP000002530">
    <property type="component" value="Chromosome 4"/>
</dbReference>
<dbReference type="GO" id="GO:0005945">
    <property type="term" value="C:6-phosphofructokinase complex"/>
    <property type="evidence" value="ECO:0000318"/>
    <property type="project" value="GO_Central"/>
</dbReference>
<dbReference type="GO" id="GO:0005739">
    <property type="term" value="C:mitochondrion"/>
    <property type="evidence" value="ECO:0000318"/>
    <property type="project" value="GO_Central"/>
</dbReference>
<dbReference type="GO" id="GO:0003872">
    <property type="term" value="F:6-phosphofructokinase activity"/>
    <property type="evidence" value="ECO:0000318"/>
    <property type="project" value="GO_Central"/>
</dbReference>
<dbReference type="GO" id="GO:0005524">
    <property type="term" value="F:ATP binding"/>
    <property type="evidence" value="ECO:0007669"/>
    <property type="project" value="UniProtKB-KW"/>
</dbReference>
<dbReference type="GO" id="GO:0070095">
    <property type="term" value="F:fructose-6-phosphate binding"/>
    <property type="evidence" value="ECO:0000318"/>
    <property type="project" value="GO_Central"/>
</dbReference>
<dbReference type="GO" id="GO:0046872">
    <property type="term" value="F:metal ion binding"/>
    <property type="evidence" value="ECO:0007669"/>
    <property type="project" value="UniProtKB-KW"/>
</dbReference>
<dbReference type="GO" id="GO:0061621">
    <property type="term" value="P:canonical glycolysis"/>
    <property type="evidence" value="ECO:0000318"/>
    <property type="project" value="GO_Central"/>
</dbReference>
<dbReference type="GO" id="GO:0030388">
    <property type="term" value="P:fructose 1,6-bisphosphate metabolic process"/>
    <property type="evidence" value="ECO:0000318"/>
    <property type="project" value="GO_Central"/>
</dbReference>
<dbReference type="GO" id="GO:0006002">
    <property type="term" value="P:fructose 6-phosphate metabolic process"/>
    <property type="evidence" value="ECO:0000318"/>
    <property type="project" value="GO_Central"/>
</dbReference>
<dbReference type="FunFam" id="3.40.50.450:FF:000010">
    <property type="entry name" value="ATP-dependent 6-phosphofructokinase"/>
    <property type="match status" value="1"/>
</dbReference>
<dbReference type="FunFam" id="3.40.50.460:FF:000007">
    <property type="entry name" value="ATP-dependent 6-phosphofructokinase"/>
    <property type="match status" value="1"/>
</dbReference>
<dbReference type="FunFam" id="3.40.50.460:FF:000008">
    <property type="entry name" value="ATP-dependent 6-phosphofructokinase"/>
    <property type="match status" value="1"/>
</dbReference>
<dbReference type="Gene3D" id="3.40.50.450">
    <property type="match status" value="2"/>
</dbReference>
<dbReference type="Gene3D" id="3.40.50.460">
    <property type="entry name" value="Phosphofructokinase domain"/>
    <property type="match status" value="2"/>
</dbReference>
<dbReference type="HAMAP" id="MF_03184">
    <property type="entry name" value="Phosphofructokinase_I_E"/>
    <property type="match status" value="1"/>
</dbReference>
<dbReference type="InterPro" id="IPR009161">
    <property type="entry name" value="6-Pfructokinase_euk"/>
</dbReference>
<dbReference type="InterPro" id="IPR022953">
    <property type="entry name" value="ATP_PFK"/>
</dbReference>
<dbReference type="InterPro" id="IPR015912">
    <property type="entry name" value="Phosphofructokinase_CS"/>
</dbReference>
<dbReference type="InterPro" id="IPR000023">
    <property type="entry name" value="Phosphofructokinase_dom"/>
</dbReference>
<dbReference type="InterPro" id="IPR035966">
    <property type="entry name" value="PKF_sf"/>
</dbReference>
<dbReference type="NCBIfam" id="TIGR02478">
    <property type="entry name" value="6PF1K_euk"/>
    <property type="match status" value="1"/>
</dbReference>
<dbReference type="PANTHER" id="PTHR13697:SF4">
    <property type="entry name" value="ATP-DEPENDENT 6-PHOSPHOFRUCTOKINASE"/>
    <property type="match status" value="1"/>
</dbReference>
<dbReference type="PANTHER" id="PTHR13697">
    <property type="entry name" value="PHOSPHOFRUCTOKINASE"/>
    <property type="match status" value="1"/>
</dbReference>
<dbReference type="Pfam" id="PF00365">
    <property type="entry name" value="PFK"/>
    <property type="match status" value="2"/>
</dbReference>
<dbReference type="PIRSF" id="PIRSF000533">
    <property type="entry name" value="ATP_PFK_euk"/>
    <property type="match status" value="1"/>
</dbReference>
<dbReference type="PRINTS" id="PR00476">
    <property type="entry name" value="PHFRCTKINASE"/>
</dbReference>
<dbReference type="SUPFAM" id="SSF53784">
    <property type="entry name" value="Phosphofructokinase"/>
    <property type="match status" value="2"/>
</dbReference>
<dbReference type="PROSITE" id="PS00433">
    <property type="entry name" value="PHOSPHOFRUCTOKINASE"/>
    <property type="match status" value="2"/>
</dbReference>
<sequence>MSSTQAPVEPPKRRRIGVLTSGGDAPGMNGAVRAVVRMAIYSDCEAYAVFEGYEGLVHGGHMIRQLHWEDVRGWLSKGGTLIGSARSMAFRERAGRLKAAKNMVLRGIDALVVCGGDGSLTGADVFRSEWPGLLEELVKNGELTEEQIEPYKVLNIVGLVGSIDNDMSGTDATIGCYSSLTRICDAVDDVFDTAFSHQRGFVIEVMGRHCGWLALMSAISTGADWLFIPEMPPRDGWEDDMCSIITKNRKERGKRRTIVIVAEGAQDRSLNKISSSTVKDILTQRLGLDTRVTVLGHTQRGGPACAYDRWLSTLQGVEAVRAVLDMKPDSPSPVITIRENKIMRTPLVDAVQETKHVAKLIHDKDFEAAMRLRDAEFKEYHFAYRNTATPDHPKMILPQDKRMRIAIIHVGAPAGGMNQATRAAVGYCLTRGHTPLAIHNGFPGLCRHHDDQPVGSVREVKWLESDAWVNEGGSDIGTNRSLPSEDFETTAMCFEKYKFDALFVVGGFEAFTAVSQLRQARDKYPAFKIPMVVLPATISNNVPGTEYSLGSDTCLNTLIDFCDAIRQSASSSRRRVFVIETQGGKSGYIATTAGLAVGATAVYIPEEGIDIKMLSNDIDFLRENFARDKGANRAGKLILRNECASSTYTTQVIADIFKEEAKGRFESRSAVPGHFQQGGKPSPMDRIRALRMAVKCMLHLENYAGKSRDEIAADPMSAAVIGIKGSQVLFSAMGGEDGLEATETDWARRRPKTEFWLELQNYVNVLSGRASAGKPLWSCYESKHFPSCCRLYNTDLSIDIDPSALTSS</sequence>
<organism>
    <name type="scientific">Aspergillus fumigatus (strain ATCC MYA-4609 / CBS 101355 / FGSC A1100 / Af293)</name>
    <name type="common">Neosartorya fumigata</name>
    <dbReference type="NCBI Taxonomy" id="330879"/>
    <lineage>
        <taxon>Eukaryota</taxon>
        <taxon>Fungi</taxon>
        <taxon>Dikarya</taxon>
        <taxon>Ascomycota</taxon>
        <taxon>Pezizomycotina</taxon>
        <taxon>Eurotiomycetes</taxon>
        <taxon>Eurotiomycetidae</taxon>
        <taxon>Eurotiales</taxon>
        <taxon>Aspergillaceae</taxon>
        <taxon>Aspergillus</taxon>
        <taxon>Aspergillus subgen. Fumigati</taxon>
    </lineage>
</organism>
<accession>Q4W9B8</accession>
<keyword id="KW-0021">Allosteric enzyme</keyword>
<keyword id="KW-0067">ATP-binding</keyword>
<keyword id="KW-0963">Cytoplasm</keyword>
<keyword id="KW-0324">Glycolysis</keyword>
<keyword id="KW-0418">Kinase</keyword>
<keyword id="KW-0460">Magnesium</keyword>
<keyword id="KW-0479">Metal-binding</keyword>
<keyword id="KW-0547">Nucleotide-binding</keyword>
<keyword id="KW-1185">Reference proteome</keyword>
<keyword id="KW-0808">Transferase</keyword>
<evidence type="ECO:0000255" key="1">
    <source>
        <dbReference type="HAMAP-Rule" id="MF_03184"/>
    </source>
</evidence>
<evidence type="ECO:0000256" key="2">
    <source>
        <dbReference type="SAM" id="MobiDB-lite"/>
    </source>
</evidence>